<comment type="function">
    <text>This is a seed storage protein.</text>
</comment>
<comment type="subunit">
    <text>Hexamer; each subunit is composed of an acidic and a basic chain derived from a single precursor and linked by a disulfide bond.</text>
</comment>
<comment type="similarity">
    <text evidence="5">Belongs to the 11S seed storage protein (globulins) family.</text>
</comment>
<dbReference type="EMBL" id="X62120">
    <property type="protein sequence ID" value="CAA44042.1"/>
    <property type="molecule type" value="Genomic_DNA"/>
</dbReference>
<dbReference type="SMR" id="P33525"/>
<dbReference type="OrthoDB" id="2016041at2759"/>
<dbReference type="GO" id="GO:0045735">
    <property type="term" value="F:nutrient reservoir activity"/>
    <property type="evidence" value="ECO:0007669"/>
    <property type="project" value="UniProtKB-KW"/>
</dbReference>
<dbReference type="GO" id="GO:0010431">
    <property type="term" value="P:seed maturation"/>
    <property type="evidence" value="ECO:0007669"/>
    <property type="project" value="UniProtKB-ARBA"/>
</dbReference>
<dbReference type="CDD" id="cd02243">
    <property type="entry name" value="cupin_11S_legumin_C"/>
    <property type="match status" value="1"/>
</dbReference>
<dbReference type="CDD" id="cd02242">
    <property type="entry name" value="cupin_11S_legumin_N"/>
    <property type="match status" value="1"/>
</dbReference>
<dbReference type="FunFam" id="2.60.120.10:FF:000073">
    <property type="entry name" value="Glycinin G1"/>
    <property type="match status" value="1"/>
</dbReference>
<dbReference type="FunFam" id="2.60.120.10:FF:000439">
    <property type="entry name" value="Seed storage protein"/>
    <property type="match status" value="1"/>
</dbReference>
<dbReference type="Gene3D" id="2.60.120.10">
    <property type="entry name" value="Jelly Rolls"/>
    <property type="match status" value="3"/>
</dbReference>
<dbReference type="InterPro" id="IPR022379">
    <property type="entry name" value="11S_seedstore_CS"/>
</dbReference>
<dbReference type="InterPro" id="IPR006044">
    <property type="entry name" value="11S_seedstore_pln"/>
</dbReference>
<dbReference type="InterPro" id="IPR006045">
    <property type="entry name" value="Cupin_1"/>
</dbReference>
<dbReference type="InterPro" id="IPR014710">
    <property type="entry name" value="RmlC-like_jellyroll"/>
</dbReference>
<dbReference type="InterPro" id="IPR011051">
    <property type="entry name" value="RmlC_Cupin_sf"/>
</dbReference>
<dbReference type="InterPro" id="IPR050253">
    <property type="entry name" value="Seed_Storage-Functional"/>
</dbReference>
<dbReference type="PANTHER" id="PTHR31189:SF73">
    <property type="entry name" value="11S GLOBULIN"/>
    <property type="match status" value="1"/>
</dbReference>
<dbReference type="PANTHER" id="PTHR31189">
    <property type="entry name" value="OS03G0336100 PROTEIN-RELATED"/>
    <property type="match status" value="1"/>
</dbReference>
<dbReference type="Pfam" id="PF00190">
    <property type="entry name" value="Cupin_1"/>
    <property type="match status" value="2"/>
</dbReference>
<dbReference type="PRINTS" id="PR00439">
    <property type="entry name" value="11SGLOBULIN"/>
</dbReference>
<dbReference type="SMART" id="SM00835">
    <property type="entry name" value="Cupin_1"/>
    <property type="match status" value="2"/>
</dbReference>
<dbReference type="SUPFAM" id="SSF51182">
    <property type="entry name" value="RmlC-like cupins"/>
    <property type="match status" value="1"/>
</dbReference>
<dbReference type="PROSITE" id="PS00305">
    <property type="entry name" value="11S_SEED_STORAGE"/>
    <property type="match status" value="1"/>
</dbReference>
<sequence>MVKVPHLLVATFGVLLVLNGCLARQSLGVPPQLGNACNLDNLDVLQPTETIKSEAGRVEYWDHNNPQIRCAGVSVSRVIIEQGGLYLPTFFSSPKISYVVQGMGISGRVVPGCAETFMDSQPMQGQQQGQPWQGQQGQQGQQGQQGQQGQQGQQGQQGQQGQQGQQGQQQQGFRDMHQKVEHVRHGDIIAITAGSSHWIYNTGDQPLVIICLLDIANYQNQLDRNPRTFRLAGNNPQGGSQQQQQQQQNMLSGFDPQVLAQALKIDVRLAQELQNQQDSRGNIVRVKGPFQVVRPPLRQPYESEQWRHPRGPPQSPQDNGLEETICSMRTHENIDDPARADVYKPNLGRVTSVNSYTLPILQYIRLSATRGILQGNAMVLPKYNMNANEILYCTQGQARIQVVNDNGQNVLDQQVQKGQLVVIPQGFAYVVQSHQNNFEWISFKTNANAMVSTLAGRTSALRALPLEVITNAFQISLEEARRIKFNTLETTLTRARGGQPQLIEEIVEA</sequence>
<name>CRU3_BRANA</name>
<keyword id="KW-1015">Disulfide bond</keyword>
<keyword id="KW-0597">Phosphoprotein</keyword>
<keyword id="KW-0708">Seed storage protein</keyword>
<keyword id="KW-0732">Signal</keyword>
<keyword id="KW-0758">Storage protein</keyword>
<gene>
    <name type="primary">CRU1</name>
</gene>
<proteinExistence type="inferred from homology"/>
<feature type="signal peptide" evidence="1">
    <location>
        <begin position="1"/>
        <end position="23"/>
    </location>
</feature>
<feature type="chain" id="PRO_0000032036" description="Cruciferin CRU1 alpha chain">
    <location>
        <begin position="24"/>
        <end position="319"/>
    </location>
</feature>
<feature type="chain" id="PRO_0000032037" description="Cruciferin CRU1 beta chain">
    <location>
        <begin position="320"/>
        <end position="509"/>
    </location>
</feature>
<feature type="domain" description="Cupin type-1 1" evidence="3">
    <location>
        <begin position="42"/>
        <end position="271"/>
    </location>
</feature>
<feature type="domain" description="Cupin type-1 2" evidence="3">
    <location>
        <begin position="332"/>
        <end position="481"/>
    </location>
</feature>
<feature type="region of interest" description="Disordered" evidence="4">
    <location>
        <begin position="119"/>
        <end position="175"/>
    </location>
</feature>
<feature type="region of interest" description="Disordered" evidence="4">
    <location>
        <begin position="230"/>
        <end position="249"/>
    </location>
</feature>
<feature type="region of interest" description="Disordered" evidence="4">
    <location>
        <begin position="301"/>
        <end position="321"/>
    </location>
</feature>
<feature type="compositionally biased region" description="Low complexity" evidence="4">
    <location>
        <begin position="124"/>
        <end position="172"/>
    </location>
</feature>
<feature type="modified residue" description="Phosphoserine" evidence="2">
    <location>
        <position position="53"/>
    </location>
</feature>
<feature type="modified residue" description="Phosphoserine" evidence="2">
    <location>
        <position position="97"/>
    </location>
</feature>
<feature type="modified residue" description="Phosphothreonine" evidence="2">
    <location>
        <position position="116"/>
    </location>
</feature>
<feature type="modified residue" description="Phosphoserine" evidence="2">
    <location>
        <position position="352"/>
    </location>
</feature>
<feature type="modified residue" description="Phosphothreonine" evidence="2">
    <location>
        <position position="445"/>
    </location>
</feature>
<feature type="modified residue" description="Phosphothreonine" evidence="2">
    <location>
        <position position="487"/>
    </location>
</feature>
<feature type="disulfide bond" evidence="1">
    <location>
        <begin position="37"/>
        <end position="70"/>
    </location>
</feature>
<feature type="disulfide bond" description="Interchain (between alpha and beta chains)" evidence="3">
    <location>
        <begin position="113"/>
        <end position="326"/>
    </location>
</feature>
<accession>P33525</accession>
<protein>
    <recommendedName>
        <fullName>Cruciferin CRU1</fullName>
    </recommendedName>
    <alternativeName>
        <fullName>11S globulin</fullName>
    </alternativeName>
    <alternativeName>
        <fullName>12S storage protein</fullName>
    </alternativeName>
    <component>
        <recommendedName>
            <fullName>Cruciferin CRU1 alpha chain</fullName>
        </recommendedName>
    </component>
    <component>
        <recommendedName>
            <fullName>Cruciferin CRU1 beta chain</fullName>
        </recommendedName>
    </component>
</protein>
<organism>
    <name type="scientific">Brassica napus</name>
    <name type="common">Rape</name>
    <dbReference type="NCBI Taxonomy" id="3708"/>
    <lineage>
        <taxon>Eukaryota</taxon>
        <taxon>Viridiplantae</taxon>
        <taxon>Streptophyta</taxon>
        <taxon>Embryophyta</taxon>
        <taxon>Tracheophyta</taxon>
        <taxon>Spermatophyta</taxon>
        <taxon>Magnoliopsida</taxon>
        <taxon>eudicotyledons</taxon>
        <taxon>Gunneridae</taxon>
        <taxon>Pentapetalae</taxon>
        <taxon>rosids</taxon>
        <taxon>malvids</taxon>
        <taxon>Brassicales</taxon>
        <taxon>Brassicaceae</taxon>
        <taxon>Brassiceae</taxon>
        <taxon>Brassica</taxon>
    </lineage>
</organism>
<evidence type="ECO:0000250" key="1"/>
<evidence type="ECO:0000250" key="2">
    <source>
        <dbReference type="UniProtKB" id="Q96318"/>
    </source>
</evidence>
<evidence type="ECO:0000255" key="3"/>
<evidence type="ECO:0000256" key="4">
    <source>
        <dbReference type="SAM" id="MobiDB-lite"/>
    </source>
</evidence>
<evidence type="ECO:0000305" key="5"/>
<reference key="1">
    <citation type="journal article" date="1992" name="Plant Mol. Biol.">
        <title>Characterization of a Brassica napus gene encoding a cruciferin subunit: estimation of sizes of cruciferin gene families.</title>
        <authorList>
            <person name="Roedin J."/>
            <person name="Sjoedahl S."/>
            <person name="Josefsson L.-G."/>
            <person name="Rask L."/>
        </authorList>
    </citation>
    <scope>NUCLEOTIDE SEQUENCE [GENOMIC DNA]</scope>
</reference>